<comment type="function">
    <text evidence="1">This protein is involved in the repair of mismatches in DNA. It is required for dam-dependent methyl-directed DNA mismatch repair. May act as a 'molecular matchmaker', a protein that promotes the formation of a stable complex between two or more DNA-binding proteins in an ATP-dependent manner without itself being part of a final effector complex.</text>
</comment>
<comment type="similarity">
    <text evidence="1">Belongs to the DNA mismatch repair MutL/HexB family.</text>
</comment>
<proteinExistence type="inferred from homology"/>
<reference key="1">
    <citation type="submission" date="2009-04" db="EMBL/GenBank/DDBJ databases">
        <title>Genome sequence of Bacillus anthracis A0248.</title>
        <authorList>
            <person name="Dodson R.J."/>
            <person name="Munk A.C."/>
            <person name="Bruce D."/>
            <person name="Detter C."/>
            <person name="Tapia R."/>
            <person name="Sutton G."/>
            <person name="Sims D."/>
            <person name="Brettin T."/>
        </authorList>
    </citation>
    <scope>NUCLEOTIDE SEQUENCE [LARGE SCALE GENOMIC DNA]</scope>
    <source>
        <strain>A0248</strain>
    </source>
</reference>
<evidence type="ECO:0000255" key="1">
    <source>
        <dbReference type="HAMAP-Rule" id="MF_00149"/>
    </source>
</evidence>
<evidence type="ECO:0000256" key="2">
    <source>
        <dbReference type="SAM" id="MobiDB-lite"/>
    </source>
</evidence>
<gene>
    <name evidence="1" type="primary">mutL</name>
    <name type="ordered locus">BAA_3929</name>
</gene>
<dbReference type="EMBL" id="CP001598">
    <property type="protein sequence ID" value="ACQ50577.1"/>
    <property type="molecule type" value="Genomic_DNA"/>
</dbReference>
<dbReference type="RefSeq" id="WP_000516478.1">
    <property type="nucleotide sequence ID" value="NC_012659.1"/>
</dbReference>
<dbReference type="SMR" id="C3P5H4"/>
<dbReference type="GeneID" id="45023597"/>
<dbReference type="KEGG" id="bai:BAA_3929"/>
<dbReference type="HOGENOM" id="CLU_004131_4_1_9"/>
<dbReference type="GO" id="GO:0032300">
    <property type="term" value="C:mismatch repair complex"/>
    <property type="evidence" value="ECO:0007669"/>
    <property type="project" value="InterPro"/>
</dbReference>
<dbReference type="GO" id="GO:0005524">
    <property type="term" value="F:ATP binding"/>
    <property type="evidence" value="ECO:0007669"/>
    <property type="project" value="InterPro"/>
</dbReference>
<dbReference type="GO" id="GO:0016887">
    <property type="term" value="F:ATP hydrolysis activity"/>
    <property type="evidence" value="ECO:0007669"/>
    <property type="project" value="InterPro"/>
</dbReference>
<dbReference type="GO" id="GO:0140664">
    <property type="term" value="F:ATP-dependent DNA damage sensor activity"/>
    <property type="evidence" value="ECO:0007669"/>
    <property type="project" value="InterPro"/>
</dbReference>
<dbReference type="GO" id="GO:0030983">
    <property type="term" value="F:mismatched DNA binding"/>
    <property type="evidence" value="ECO:0007669"/>
    <property type="project" value="InterPro"/>
</dbReference>
<dbReference type="GO" id="GO:0006298">
    <property type="term" value="P:mismatch repair"/>
    <property type="evidence" value="ECO:0007669"/>
    <property type="project" value="UniProtKB-UniRule"/>
</dbReference>
<dbReference type="CDD" id="cd16926">
    <property type="entry name" value="HATPase_MutL-MLH-PMS-like"/>
    <property type="match status" value="1"/>
</dbReference>
<dbReference type="CDD" id="cd00782">
    <property type="entry name" value="MutL_Trans"/>
    <property type="match status" value="1"/>
</dbReference>
<dbReference type="FunFam" id="3.30.1370.100:FF:000004">
    <property type="entry name" value="DNA mismatch repair endonuclease MutL"/>
    <property type="match status" value="1"/>
</dbReference>
<dbReference type="FunFam" id="3.30.230.10:FF:000036">
    <property type="entry name" value="DNA mismatch repair endonuclease MutL"/>
    <property type="match status" value="1"/>
</dbReference>
<dbReference type="FunFam" id="3.30.565.10:FF:000003">
    <property type="entry name" value="DNA mismatch repair endonuclease MutL"/>
    <property type="match status" value="1"/>
</dbReference>
<dbReference type="Gene3D" id="3.30.230.10">
    <property type="match status" value="1"/>
</dbReference>
<dbReference type="Gene3D" id="3.30.565.10">
    <property type="entry name" value="Histidine kinase-like ATPase, C-terminal domain"/>
    <property type="match status" value="1"/>
</dbReference>
<dbReference type="Gene3D" id="3.30.1540.20">
    <property type="entry name" value="MutL, C-terminal domain, dimerisation subdomain"/>
    <property type="match status" value="1"/>
</dbReference>
<dbReference type="Gene3D" id="3.30.1370.100">
    <property type="entry name" value="MutL, C-terminal domain, regulatory subdomain"/>
    <property type="match status" value="1"/>
</dbReference>
<dbReference type="HAMAP" id="MF_00149">
    <property type="entry name" value="DNA_mis_repair"/>
    <property type="match status" value="1"/>
</dbReference>
<dbReference type="InterPro" id="IPR014762">
    <property type="entry name" value="DNA_mismatch_repair_CS"/>
</dbReference>
<dbReference type="InterPro" id="IPR020667">
    <property type="entry name" value="DNA_mismatch_repair_MutL"/>
</dbReference>
<dbReference type="InterPro" id="IPR013507">
    <property type="entry name" value="DNA_mismatch_S5_2-like"/>
</dbReference>
<dbReference type="InterPro" id="IPR036890">
    <property type="entry name" value="HATPase_C_sf"/>
</dbReference>
<dbReference type="InterPro" id="IPR002099">
    <property type="entry name" value="MutL/Mlh/PMS"/>
</dbReference>
<dbReference type="InterPro" id="IPR038973">
    <property type="entry name" value="MutL/Mlh/Pms-like"/>
</dbReference>
<dbReference type="InterPro" id="IPR014790">
    <property type="entry name" value="MutL_C"/>
</dbReference>
<dbReference type="InterPro" id="IPR042120">
    <property type="entry name" value="MutL_C_dimsub"/>
</dbReference>
<dbReference type="InterPro" id="IPR042121">
    <property type="entry name" value="MutL_C_regsub"/>
</dbReference>
<dbReference type="InterPro" id="IPR037198">
    <property type="entry name" value="MutL_C_sf"/>
</dbReference>
<dbReference type="InterPro" id="IPR020568">
    <property type="entry name" value="Ribosomal_Su5_D2-typ_SF"/>
</dbReference>
<dbReference type="InterPro" id="IPR014721">
    <property type="entry name" value="Ribsml_uS5_D2-typ_fold_subgr"/>
</dbReference>
<dbReference type="NCBIfam" id="TIGR00585">
    <property type="entry name" value="mutl"/>
    <property type="match status" value="1"/>
</dbReference>
<dbReference type="NCBIfam" id="NF000950">
    <property type="entry name" value="PRK00095.1-3"/>
    <property type="match status" value="1"/>
</dbReference>
<dbReference type="PANTHER" id="PTHR10073">
    <property type="entry name" value="DNA MISMATCH REPAIR PROTEIN MLH, PMS, MUTL"/>
    <property type="match status" value="1"/>
</dbReference>
<dbReference type="PANTHER" id="PTHR10073:SF12">
    <property type="entry name" value="DNA MISMATCH REPAIR PROTEIN MLH1"/>
    <property type="match status" value="1"/>
</dbReference>
<dbReference type="Pfam" id="PF01119">
    <property type="entry name" value="DNA_mis_repair"/>
    <property type="match status" value="1"/>
</dbReference>
<dbReference type="Pfam" id="PF13589">
    <property type="entry name" value="HATPase_c_3"/>
    <property type="match status" value="1"/>
</dbReference>
<dbReference type="Pfam" id="PF08676">
    <property type="entry name" value="MutL_C"/>
    <property type="match status" value="1"/>
</dbReference>
<dbReference type="SMART" id="SM01340">
    <property type="entry name" value="DNA_mis_repair"/>
    <property type="match status" value="1"/>
</dbReference>
<dbReference type="SMART" id="SM00853">
    <property type="entry name" value="MutL_C"/>
    <property type="match status" value="1"/>
</dbReference>
<dbReference type="SUPFAM" id="SSF55874">
    <property type="entry name" value="ATPase domain of HSP90 chaperone/DNA topoisomerase II/histidine kinase"/>
    <property type="match status" value="1"/>
</dbReference>
<dbReference type="SUPFAM" id="SSF118116">
    <property type="entry name" value="DNA mismatch repair protein MutL"/>
    <property type="match status" value="1"/>
</dbReference>
<dbReference type="SUPFAM" id="SSF54211">
    <property type="entry name" value="Ribosomal protein S5 domain 2-like"/>
    <property type="match status" value="1"/>
</dbReference>
<dbReference type="PROSITE" id="PS00058">
    <property type="entry name" value="DNA_MISMATCH_REPAIR_1"/>
    <property type="match status" value="1"/>
</dbReference>
<protein>
    <recommendedName>
        <fullName evidence="1">DNA mismatch repair protein MutL</fullName>
    </recommendedName>
</protein>
<keyword id="KW-0227">DNA damage</keyword>
<keyword id="KW-0234">DNA repair</keyword>
<name>MUTL_BACAA</name>
<feature type="chain" id="PRO_1000192154" description="DNA mismatch repair protein MutL">
    <location>
        <begin position="1"/>
        <end position="626"/>
    </location>
</feature>
<feature type="region of interest" description="Disordered" evidence="2">
    <location>
        <begin position="377"/>
        <end position="413"/>
    </location>
</feature>
<feature type="compositionally biased region" description="Polar residues" evidence="2">
    <location>
        <begin position="383"/>
        <end position="393"/>
    </location>
</feature>
<accession>C3P5H4</accession>
<sequence length="626" mass="71456">MGKIRKLDDQLSNLIAAGEVVERPASVVKELVENSIDANSTSIEIHLEEAGLSKIRIIDNGDGIAEEDCIVAFERHATSKIKDENDLFRIRTLGFRGEALPSIASVSELELITSTGDAPGTHLIIKGGDIIKQEKTASRKGTDITVQNLFFNTPARLKYMKTIHTELGNITDIVYRIAMSHPEVSLKLFHNEKKLLHTSGNGDVRQVLASIYSIQVAKKLVPIEAESLDFTIKGYVTLPEVTRASRNYMSTIVNGRYVRNFVLMKAIQQGYHTLLPVGRYPIGFLSIEMDPMLVDVNVHPAKLEVRFSKEQELLKLIEETLQAAFKKIQLIPDAGVTTKKKEKDESVQEQFQFEHAKPKEPSMPEIVLPTGMDEKQEEPQAVKQPTQLWQPSTKPIIEEPIQEEKSWDSNEEGFELEELEEVREIKEIEMNGNDLPPLYPIGQMHGTYIFAQNDKGLYMIDQHAAQERINYEYFRDKVGRVAQEVQELLVPYRIDLSLTEFLRVEEQLEELKKVGLFLEQFGHQSFIVRSHPTWFPKGQETEIIDEMMEQVVKLKKVDIKKLREEAAIMMSCKASIKANQYLTNDQIFALLEELRTTTNPYTCPHGRPILVHHSTYELEKMFKRVM</sequence>
<organism>
    <name type="scientific">Bacillus anthracis (strain A0248)</name>
    <dbReference type="NCBI Taxonomy" id="592021"/>
    <lineage>
        <taxon>Bacteria</taxon>
        <taxon>Bacillati</taxon>
        <taxon>Bacillota</taxon>
        <taxon>Bacilli</taxon>
        <taxon>Bacillales</taxon>
        <taxon>Bacillaceae</taxon>
        <taxon>Bacillus</taxon>
        <taxon>Bacillus cereus group</taxon>
    </lineage>
</organism>